<gene>
    <name type="primary">rpoB2</name>
    <name type="synonym">rpoBb</name>
</gene>
<keyword id="KW-0150">Chloroplast</keyword>
<keyword id="KW-0240">DNA-directed RNA polymerase</keyword>
<keyword id="KW-0548">Nucleotidyltransferase</keyword>
<keyword id="KW-0934">Plastid</keyword>
<keyword id="KW-0804">Transcription</keyword>
<keyword id="KW-0808">Transferase</keyword>
<organism>
    <name type="scientific">Stigeoclonium helveticum</name>
    <name type="common">Green alga</name>
    <dbReference type="NCBI Taxonomy" id="55999"/>
    <lineage>
        <taxon>Eukaryota</taxon>
        <taxon>Viridiplantae</taxon>
        <taxon>Chlorophyta</taxon>
        <taxon>core chlorophytes</taxon>
        <taxon>Chlorophyceae</taxon>
        <taxon>OCC clade</taxon>
        <taxon>Chaetophorales</taxon>
        <taxon>Chaetophoraceae</taxon>
        <taxon>Stigeoclonium</taxon>
    </lineage>
</organism>
<dbReference type="EC" id="2.7.7.6"/>
<dbReference type="EMBL" id="DQ630521">
    <property type="protein sequence ID" value="ABF60213.1"/>
    <property type="molecule type" value="Genomic_DNA"/>
</dbReference>
<dbReference type="RefSeq" id="YP_764412.1">
    <property type="nucleotide sequence ID" value="NC_008372.1"/>
</dbReference>
<dbReference type="GeneID" id="4308441"/>
<dbReference type="GO" id="GO:0009507">
    <property type="term" value="C:chloroplast"/>
    <property type="evidence" value="ECO:0007669"/>
    <property type="project" value="UniProtKB-SubCell"/>
</dbReference>
<dbReference type="GO" id="GO:0000428">
    <property type="term" value="C:DNA-directed RNA polymerase complex"/>
    <property type="evidence" value="ECO:0007669"/>
    <property type="project" value="UniProtKB-KW"/>
</dbReference>
<dbReference type="GO" id="GO:0005739">
    <property type="term" value="C:mitochondrion"/>
    <property type="evidence" value="ECO:0007669"/>
    <property type="project" value="GOC"/>
</dbReference>
<dbReference type="GO" id="GO:0003677">
    <property type="term" value="F:DNA binding"/>
    <property type="evidence" value="ECO:0007669"/>
    <property type="project" value="InterPro"/>
</dbReference>
<dbReference type="GO" id="GO:0003899">
    <property type="term" value="F:DNA-directed RNA polymerase activity"/>
    <property type="evidence" value="ECO:0007669"/>
    <property type="project" value="UniProtKB-EC"/>
</dbReference>
<dbReference type="GO" id="GO:0032549">
    <property type="term" value="F:ribonucleoside binding"/>
    <property type="evidence" value="ECO:0007669"/>
    <property type="project" value="InterPro"/>
</dbReference>
<dbReference type="GO" id="GO:0006351">
    <property type="term" value="P:DNA-templated transcription"/>
    <property type="evidence" value="ECO:0007669"/>
    <property type="project" value="InterPro"/>
</dbReference>
<dbReference type="Gene3D" id="2.40.50.100">
    <property type="match status" value="1"/>
</dbReference>
<dbReference type="Gene3D" id="2.40.50.150">
    <property type="match status" value="1"/>
</dbReference>
<dbReference type="Gene3D" id="2.40.270.10">
    <property type="entry name" value="DNA-directed RNA polymerase, subunit 2, domain 6"/>
    <property type="match status" value="2"/>
</dbReference>
<dbReference type="Gene3D" id="2.170.16.10">
    <property type="entry name" value="Hedgehog/Intein (Hint) domain"/>
    <property type="match status" value="1"/>
</dbReference>
<dbReference type="Gene3D" id="3.10.28.10">
    <property type="entry name" value="Homing endonucleases"/>
    <property type="match status" value="1"/>
</dbReference>
<dbReference type="Gene3D" id="3.90.1800.10">
    <property type="entry name" value="RNA polymerase alpha subunit dimerisation domain"/>
    <property type="match status" value="1"/>
</dbReference>
<dbReference type="InterPro" id="IPR015712">
    <property type="entry name" value="DNA-dir_RNA_pol_su2"/>
</dbReference>
<dbReference type="InterPro" id="IPR007120">
    <property type="entry name" value="DNA-dir_RNAP_su2_dom"/>
</dbReference>
<dbReference type="InterPro" id="IPR037033">
    <property type="entry name" value="DNA-dir_RNAP_su2_hyb_sf"/>
</dbReference>
<dbReference type="InterPro" id="IPR036844">
    <property type="entry name" value="Hint_dom_sf"/>
</dbReference>
<dbReference type="InterPro" id="IPR027434">
    <property type="entry name" value="Homing_endonucl"/>
</dbReference>
<dbReference type="InterPro" id="IPR007121">
    <property type="entry name" value="RNA_pol_bsu_CS"/>
</dbReference>
<dbReference type="InterPro" id="IPR007641">
    <property type="entry name" value="RNA_pol_Rpb2_7"/>
</dbReference>
<dbReference type="InterPro" id="IPR014724">
    <property type="entry name" value="RNA_pol_RPB2_OB-fold"/>
</dbReference>
<dbReference type="PANTHER" id="PTHR20856">
    <property type="entry name" value="DNA-DIRECTED RNA POLYMERASE I SUBUNIT 2"/>
    <property type="match status" value="1"/>
</dbReference>
<dbReference type="Pfam" id="PF00562">
    <property type="entry name" value="RNA_pol_Rpb2_6"/>
    <property type="match status" value="1"/>
</dbReference>
<dbReference type="Pfam" id="PF04560">
    <property type="entry name" value="RNA_pol_Rpb2_7"/>
    <property type="match status" value="1"/>
</dbReference>
<dbReference type="SUPFAM" id="SSF64484">
    <property type="entry name" value="beta and beta-prime subunits of DNA dependent RNA-polymerase"/>
    <property type="match status" value="2"/>
</dbReference>
<dbReference type="SUPFAM" id="SSF51294">
    <property type="entry name" value="Hedgehog/intein (Hint) domain"/>
    <property type="match status" value="1"/>
</dbReference>
<dbReference type="PROSITE" id="PS01166">
    <property type="entry name" value="RNA_POL_BETA"/>
    <property type="match status" value="1"/>
</dbReference>
<protein>
    <recommendedName>
        <fullName>DNA-directed RNA polymerase subunit beta C-terminal section</fullName>
        <ecNumber>2.7.7.6</ecNumber>
    </recommendedName>
    <alternativeName>
        <fullName>PEP</fullName>
    </alternativeName>
    <alternativeName>
        <fullName>Plastid-encoded RNA polymerase subunit beta C-terminal section</fullName>
        <shortName>RNA polymerase subunit beta C-terminal section</shortName>
    </alternativeName>
</protein>
<reference key="1">
    <citation type="journal article" date="2006" name="Mol. Genet. Genomics">
        <title>Distinctive architecture of the chloroplast genome in the chlorophycean green alga Stigeoclonium helveticum.</title>
        <authorList>
            <person name="Belanger A.-S."/>
            <person name="Brouard J.-S."/>
            <person name="Charlebois P."/>
            <person name="Otis C."/>
            <person name="Lemieux C."/>
            <person name="Turmel M."/>
        </authorList>
    </citation>
    <scope>NUCLEOTIDE SEQUENCE [LARGE SCALE GENOMIC DNA]</scope>
    <source>
        <strain>UTEX 441</strain>
    </source>
</reference>
<feature type="chain" id="PRO_0000308262" description="DNA-directed RNA polymerase subunit beta C-terminal section">
    <location>
        <begin position="1"/>
        <end position="1080"/>
    </location>
</feature>
<sequence>MSTSQSLNIIPIEYSLQTYQRSNQDTSMLHRPVVKEGEWVQAGDLLSDCASSIGGEFSIGQNILIAYLPWEGYNYEDAILISERLVYDDLYTSIHIERYDISTEKNPYGIEKITKDIVLLKDTTELNHLDKNGIAQLGAWLKEGDILVGKITPTESKKEVARYVQLYNDILGKKINYAIRDSSLRVPRGLEAKVIRVKTFPERKNETKNWENKIGLKSKALAFSVQHFLSKNQSNKKRTLSLKSKWEKETSLSSFSSLAWQKKSPLFFVFKNGIFEKLKNFPKKKKKNERVFALKKKSSKKFRFFELQKKFRFFFRNFFFFKAPKKKSPLFFFFKSETFDKERNFQKMSPNQSKQNWVKISIKKEWQKVGSFGKKKASKGKISFFPSFPQASLVGKASFFSPSRFEKKRDASNFLKSSCISSVHIYLAEKRKVQVGDKMAGRHGNKGIISQILPRQDMPYLPDGTPIDMALNPLGVPSRMNVGQIYECLLGLAGKHLGEQYRIQPFDEAFGPEASRSFVFSKLYSAKTKTGQSWLFQPTNPGKLKLFDGRTGNCFDQAITTGYSYMIKLVHLVDEKIHCLTVDHEVLTTKGWIPLNKVKTSHFVATLKKNGQLVYQNPTNIYHYPEFKGELYHIKNVNLDLLVTLNHRMYVKNGIIEATSSVDYQLIPAKDIVGQHKKYCKTAFWDKENYQFILPSVISNSIVIPEKTMNMEAWLQFFGIWIAEGWALTNTISNNNVTNFNQSSSSPYVVQISIKKKKVLEILNNVIPILGYSFNYYDNNITICDKQLWAYLRPLSLGNPYRKLPIWVWDLSQDQARVLLLAMITVFKNGTNSKWEKAASLSSRLSLASVFPEFLKKRIDKGLSYYTSSVELADDISRLALHAGWSGNNYLLKKKGSISSFDGKQIICQFDIWRISIIQSKNQPAVNHGYHSKGKEEVLPYQGAVYCLSVPNEIFYVRRNGLSVWTGNSRSSGPYSLITQQPLKGRSKHGGQRLGEMEVWAIEAYGAAFTLLELLTIKSDDVTGRLTIWDYVLYKKPLYIGTPASFKVLICELQALCLDIGIYKADKSNILKQINVSSMG</sequence>
<name>RPOB2_STIHE</name>
<proteinExistence type="inferred from homology"/>
<geneLocation type="chloroplast"/>
<accession>Q06SF4</accession>
<comment type="function">
    <text evidence="1">DNA-dependent RNA polymerase catalyzes the transcription of DNA into RNA using the four ribonucleoside triphosphates as substrates.</text>
</comment>
<comment type="catalytic activity">
    <reaction>
        <text>RNA(n) + a ribonucleoside 5'-triphosphate = RNA(n+1) + diphosphate</text>
        <dbReference type="Rhea" id="RHEA:21248"/>
        <dbReference type="Rhea" id="RHEA-COMP:14527"/>
        <dbReference type="Rhea" id="RHEA-COMP:17342"/>
        <dbReference type="ChEBI" id="CHEBI:33019"/>
        <dbReference type="ChEBI" id="CHEBI:61557"/>
        <dbReference type="ChEBI" id="CHEBI:140395"/>
        <dbReference type="EC" id="2.7.7.6"/>
    </reaction>
</comment>
<comment type="subunit">
    <text evidence="1">In plastids the minimal PEP RNA polymerase catalytic core is composed of four subunits: alpha, beta, beta', and beta''. When a (nuclear-encoded) sigma factor is associated with the core the holoenzyme is formed, which can initiate transcription (By similarity).</text>
</comment>
<comment type="subcellular location">
    <subcellularLocation>
        <location>Plastid</location>
        <location>Chloroplast</location>
    </subcellularLocation>
</comment>
<comment type="miscellaneous">
    <text>In S.helveticum the gene for this protein is split in two.</text>
</comment>
<comment type="similarity">
    <text evidence="2">Belongs to the RNA polymerase beta chain family.</text>
</comment>
<evidence type="ECO:0000250" key="1"/>
<evidence type="ECO:0000305" key="2"/>